<keyword id="KW-0012">Acyltransferase</keyword>
<keyword id="KW-0028">Amino-acid biosynthesis</keyword>
<keyword id="KW-0963">Cytoplasm</keyword>
<keyword id="KW-0220">Diaminopimelate biosynthesis</keyword>
<keyword id="KW-0457">Lysine biosynthesis</keyword>
<keyword id="KW-0677">Repeat</keyword>
<keyword id="KW-0808">Transferase</keyword>
<gene>
    <name evidence="1" type="primary">dapD</name>
    <name type="ordered locus">YPDSF_1672</name>
</gene>
<reference key="1">
    <citation type="submission" date="2007-02" db="EMBL/GenBank/DDBJ databases">
        <title>Complete sequence of chromosome of Yersinia pestis Pestoides F.</title>
        <authorList>
            <consortium name="US DOE Joint Genome Institute"/>
            <person name="Copeland A."/>
            <person name="Lucas S."/>
            <person name="Lapidus A."/>
            <person name="Barry K."/>
            <person name="Detter J.C."/>
            <person name="Glavina del Rio T."/>
            <person name="Hammon N."/>
            <person name="Israni S."/>
            <person name="Dalin E."/>
            <person name="Tice H."/>
            <person name="Pitluck S."/>
            <person name="Di Bartolo G."/>
            <person name="Chain P."/>
            <person name="Malfatti S."/>
            <person name="Shin M."/>
            <person name="Vergez L."/>
            <person name="Schmutz J."/>
            <person name="Larimer F."/>
            <person name="Land M."/>
            <person name="Hauser L."/>
            <person name="Worsham P."/>
            <person name="Chu M."/>
            <person name="Bearden S."/>
            <person name="Garcia E."/>
            <person name="Richardson P."/>
        </authorList>
    </citation>
    <scope>NUCLEOTIDE SEQUENCE [LARGE SCALE GENOMIC DNA]</scope>
    <source>
        <strain>Pestoides F</strain>
    </source>
</reference>
<sequence length="274" mass="29937">MQQLQNVIETAFERRADITPANVDTVTREAITHVIDLLDTGALRVAEKIDGQWVTHQWLKKAVLLSFRINDNQVMEGAETRYYDKVPMKFAGYDEARFQREGFRVVPPATVRKGAFIARNTVLMPSYVNIGAFVDEGTMVDTWATVGSCAQIGKNVHLSGGVGIGGVLEPLQANPTIIEDNCFVGARSEVVEGVIVEEGSVISMGVFIGQSTRIYDRETGEVHYGRVPAGSVVVSGNLPSKDGSYSLYCAVIVKKVDAKTRSKVGINELLRTID</sequence>
<dbReference type="EC" id="2.3.1.117" evidence="1"/>
<dbReference type="EMBL" id="CP000668">
    <property type="protein sequence ID" value="ABP40057.1"/>
    <property type="molecule type" value="Genomic_DNA"/>
</dbReference>
<dbReference type="RefSeq" id="WP_002212128.1">
    <property type="nucleotide sequence ID" value="NZ_CP009715.1"/>
</dbReference>
<dbReference type="SMR" id="A4TL95"/>
<dbReference type="GeneID" id="96662373"/>
<dbReference type="KEGG" id="ypp:YPDSF_1672"/>
<dbReference type="PATRIC" id="fig|386656.14.peg.2091"/>
<dbReference type="UniPathway" id="UPA00034">
    <property type="reaction ID" value="UER00019"/>
</dbReference>
<dbReference type="GO" id="GO:0005737">
    <property type="term" value="C:cytoplasm"/>
    <property type="evidence" value="ECO:0007669"/>
    <property type="project" value="UniProtKB-SubCell"/>
</dbReference>
<dbReference type="GO" id="GO:0008666">
    <property type="term" value="F:2,3,4,5-tetrahydropyridine-2,6-dicarboxylate N-succinyltransferase activity"/>
    <property type="evidence" value="ECO:0007669"/>
    <property type="project" value="UniProtKB-UniRule"/>
</dbReference>
<dbReference type="GO" id="GO:0016779">
    <property type="term" value="F:nucleotidyltransferase activity"/>
    <property type="evidence" value="ECO:0007669"/>
    <property type="project" value="TreeGrafter"/>
</dbReference>
<dbReference type="GO" id="GO:0019877">
    <property type="term" value="P:diaminopimelate biosynthetic process"/>
    <property type="evidence" value="ECO:0007669"/>
    <property type="project" value="UniProtKB-UniRule"/>
</dbReference>
<dbReference type="GO" id="GO:0009089">
    <property type="term" value="P:lysine biosynthetic process via diaminopimelate"/>
    <property type="evidence" value="ECO:0007669"/>
    <property type="project" value="UniProtKB-UniRule"/>
</dbReference>
<dbReference type="CDD" id="cd03350">
    <property type="entry name" value="LbH_THP_succinylT"/>
    <property type="match status" value="1"/>
</dbReference>
<dbReference type="FunFam" id="2.160.10.10:FF:000004">
    <property type="entry name" value="2,3,4,5-tetrahydropyridine-2,6-dicarboxylate N-succinyltransferase"/>
    <property type="match status" value="1"/>
</dbReference>
<dbReference type="Gene3D" id="2.160.10.10">
    <property type="entry name" value="Hexapeptide repeat proteins"/>
    <property type="match status" value="1"/>
</dbReference>
<dbReference type="Gene3D" id="1.10.166.10">
    <property type="entry name" value="Tetrahydrodipicolinate-N-succinyltransferase, N-terminal domain"/>
    <property type="match status" value="1"/>
</dbReference>
<dbReference type="HAMAP" id="MF_00811">
    <property type="entry name" value="DapD"/>
    <property type="match status" value="1"/>
</dbReference>
<dbReference type="InterPro" id="IPR005664">
    <property type="entry name" value="DapD_Trfase_Hexpep_rpt_fam"/>
</dbReference>
<dbReference type="InterPro" id="IPR001451">
    <property type="entry name" value="Hexapep"/>
</dbReference>
<dbReference type="InterPro" id="IPR018357">
    <property type="entry name" value="Hexapep_transf_CS"/>
</dbReference>
<dbReference type="InterPro" id="IPR023180">
    <property type="entry name" value="THP_succinylTrfase_dom1"/>
</dbReference>
<dbReference type="InterPro" id="IPR037133">
    <property type="entry name" value="THP_succinylTrfase_N_sf"/>
</dbReference>
<dbReference type="InterPro" id="IPR011004">
    <property type="entry name" value="Trimer_LpxA-like_sf"/>
</dbReference>
<dbReference type="NCBIfam" id="TIGR00965">
    <property type="entry name" value="dapD"/>
    <property type="match status" value="1"/>
</dbReference>
<dbReference type="NCBIfam" id="NF008808">
    <property type="entry name" value="PRK11830.1"/>
    <property type="match status" value="1"/>
</dbReference>
<dbReference type="PANTHER" id="PTHR19136:SF52">
    <property type="entry name" value="2,3,4,5-TETRAHYDROPYRIDINE-2,6-DICARBOXYLATE N-SUCCINYLTRANSFERASE"/>
    <property type="match status" value="1"/>
</dbReference>
<dbReference type="PANTHER" id="PTHR19136">
    <property type="entry name" value="MOLYBDENUM COFACTOR GUANYLYLTRANSFERASE"/>
    <property type="match status" value="1"/>
</dbReference>
<dbReference type="Pfam" id="PF14602">
    <property type="entry name" value="Hexapep_2"/>
    <property type="match status" value="1"/>
</dbReference>
<dbReference type="Pfam" id="PF14805">
    <property type="entry name" value="THDPS_N_2"/>
    <property type="match status" value="1"/>
</dbReference>
<dbReference type="SUPFAM" id="SSF51161">
    <property type="entry name" value="Trimeric LpxA-like enzymes"/>
    <property type="match status" value="1"/>
</dbReference>
<dbReference type="PROSITE" id="PS00101">
    <property type="entry name" value="HEXAPEP_TRANSFERASES"/>
    <property type="match status" value="1"/>
</dbReference>
<name>DAPD_YERPP</name>
<protein>
    <recommendedName>
        <fullName evidence="1">2,3,4,5-tetrahydropyridine-2,6-dicarboxylate N-succinyltransferase</fullName>
        <ecNumber evidence="1">2.3.1.117</ecNumber>
    </recommendedName>
    <alternativeName>
        <fullName evidence="1">Tetrahydrodipicolinate N-succinyltransferase</fullName>
        <shortName evidence="1">THDP succinyltransferase</shortName>
        <shortName evidence="1">THP succinyltransferase</shortName>
        <shortName evidence="1">Tetrahydropicolinate succinylase</shortName>
    </alternativeName>
</protein>
<accession>A4TL95</accession>
<comment type="catalytic activity">
    <reaction evidence="1">
        <text>(S)-2,3,4,5-tetrahydrodipicolinate + succinyl-CoA + H2O = (S)-2-succinylamino-6-oxoheptanedioate + CoA</text>
        <dbReference type="Rhea" id="RHEA:17325"/>
        <dbReference type="ChEBI" id="CHEBI:15377"/>
        <dbReference type="ChEBI" id="CHEBI:15685"/>
        <dbReference type="ChEBI" id="CHEBI:16845"/>
        <dbReference type="ChEBI" id="CHEBI:57287"/>
        <dbReference type="ChEBI" id="CHEBI:57292"/>
        <dbReference type="EC" id="2.3.1.117"/>
    </reaction>
</comment>
<comment type="pathway">
    <text evidence="1">Amino-acid biosynthesis; L-lysine biosynthesis via DAP pathway; LL-2,6-diaminopimelate from (S)-tetrahydrodipicolinate (succinylase route): step 1/3.</text>
</comment>
<comment type="subunit">
    <text evidence="1">Homotrimer.</text>
</comment>
<comment type="subcellular location">
    <subcellularLocation>
        <location evidence="1">Cytoplasm</location>
    </subcellularLocation>
</comment>
<comment type="similarity">
    <text evidence="1">Belongs to the transferase hexapeptide repeat family.</text>
</comment>
<feature type="chain" id="PRO_1000047201" description="2,3,4,5-tetrahydropyridine-2,6-dicarboxylate N-succinyltransferase">
    <location>
        <begin position="1"/>
        <end position="274"/>
    </location>
</feature>
<feature type="binding site" evidence="1">
    <location>
        <position position="104"/>
    </location>
    <ligand>
        <name>substrate</name>
    </ligand>
</feature>
<feature type="binding site" evidence="1">
    <location>
        <position position="141"/>
    </location>
    <ligand>
        <name>substrate</name>
    </ligand>
</feature>
<organism>
    <name type="scientific">Yersinia pestis (strain Pestoides F)</name>
    <dbReference type="NCBI Taxonomy" id="386656"/>
    <lineage>
        <taxon>Bacteria</taxon>
        <taxon>Pseudomonadati</taxon>
        <taxon>Pseudomonadota</taxon>
        <taxon>Gammaproteobacteria</taxon>
        <taxon>Enterobacterales</taxon>
        <taxon>Yersiniaceae</taxon>
        <taxon>Yersinia</taxon>
    </lineage>
</organism>
<proteinExistence type="inferred from homology"/>
<evidence type="ECO:0000255" key="1">
    <source>
        <dbReference type="HAMAP-Rule" id="MF_00811"/>
    </source>
</evidence>